<reference key="1">
    <citation type="journal article" date="2009" name="Toxicon">
        <title>C-type lectin protein isoforms of Macrovipera lebetina: cDNA cloning and genetic diversity.</title>
        <authorList>
            <person name="Jebali J."/>
            <person name="Bazaa A."/>
            <person name="Sarray S."/>
            <person name="Benhaj K."/>
            <person name="Karboul A."/>
            <person name="El Ayeb M."/>
            <person name="Marrakchi N."/>
            <person name="Gargouri A."/>
        </authorList>
    </citation>
    <scope>NUCLEOTIDE SEQUENCE [MRNA]</scope>
</reference>
<protein>
    <recommendedName>
        <fullName>Snaclec A1</fullName>
    </recommendedName>
    <alternativeName>
        <fullName>C-type lectin A1</fullName>
    </alternativeName>
</protein>
<feature type="signal peptide" evidence="1">
    <location>
        <begin position="1"/>
        <end position="23"/>
    </location>
</feature>
<feature type="chain" id="PRO_0000356317" description="Snaclec A1">
    <location>
        <begin position="24"/>
        <end position="156"/>
    </location>
</feature>
<feature type="domain" description="C-type lectin" evidence="2">
    <location>
        <begin position="34"/>
        <end position="155"/>
    </location>
</feature>
<feature type="disulfide bond" evidence="2">
    <location>
        <begin position="27"/>
        <end position="38"/>
    </location>
</feature>
<feature type="disulfide bond" evidence="2">
    <location>
        <begin position="55"/>
        <end position="154"/>
    </location>
</feature>
<feature type="disulfide bond" description="Interchain" evidence="2">
    <location>
        <position position="106"/>
    </location>
</feature>
<feature type="disulfide bond" evidence="2">
    <location>
        <begin position="129"/>
        <end position="146"/>
    </location>
</feature>
<keyword id="KW-1015">Disulfide bond</keyword>
<keyword id="KW-1199">Hemostasis impairing toxin</keyword>
<keyword id="KW-0964">Secreted</keyword>
<keyword id="KW-0732">Signal</keyword>
<keyword id="KW-0800">Toxin</keyword>
<sequence>MGRSISVSFGLLVVFLSLSGTGADQDCLPGWSSHEGHCYKVFNLDKTWEDAEKFCTEQANSGHLVSIDSKKEANFVAELVSQNIKETRRTDFVWIGLRAEDKRQHCSSEWSDGSSINYQNWIEAESKKCLGLEKQTRYRKWVNLNCGQPYRFTCEI</sequence>
<proteinExistence type="evidence at transcript level"/>
<name>SLA1_MACLB</name>
<accession>B4XSY4</accession>
<organism>
    <name type="scientific">Macrovipera lebetinus</name>
    <name type="common">Levantine viper</name>
    <name type="synonym">Vipera lebetina</name>
    <dbReference type="NCBI Taxonomy" id="3148341"/>
    <lineage>
        <taxon>Eukaryota</taxon>
        <taxon>Metazoa</taxon>
        <taxon>Chordata</taxon>
        <taxon>Craniata</taxon>
        <taxon>Vertebrata</taxon>
        <taxon>Euteleostomi</taxon>
        <taxon>Lepidosauria</taxon>
        <taxon>Squamata</taxon>
        <taxon>Bifurcata</taxon>
        <taxon>Unidentata</taxon>
        <taxon>Episquamata</taxon>
        <taxon>Toxicofera</taxon>
        <taxon>Serpentes</taxon>
        <taxon>Colubroidea</taxon>
        <taxon>Viperidae</taxon>
        <taxon>Viperinae</taxon>
        <taxon>Macrovipera</taxon>
    </lineage>
</organism>
<comment type="function">
    <text evidence="1">Interferes with one step of hemostasis (modulation of platelet aggregation, or coagulation cascade, for example).</text>
</comment>
<comment type="subunit">
    <text evidence="1">Heterodimer; disulfide-linked.</text>
</comment>
<comment type="subcellular location">
    <subcellularLocation>
        <location evidence="1">Secreted</location>
    </subcellularLocation>
</comment>
<comment type="tissue specificity">
    <text>Expressed by the venom gland.</text>
</comment>
<comment type="miscellaneous">
    <text>Shows greater sequence similarity to the alpha than beta subunits compared to other heterodimer snaclecs.</text>
</comment>
<comment type="similarity">
    <text evidence="3">Belongs to the snaclec family.</text>
</comment>
<evidence type="ECO:0000250" key="1"/>
<evidence type="ECO:0000255" key="2">
    <source>
        <dbReference type="PROSITE-ProRule" id="PRU00040"/>
    </source>
</evidence>
<evidence type="ECO:0000305" key="3"/>
<dbReference type="EMBL" id="EU085446">
    <property type="protein sequence ID" value="ABW82656.1"/>
    <property type="molecule type" value="mRNA"/>
</dbReference>
<dbReference type="SMR" id="B4XSY4"/>
<dbReference type="GO" id="GO:0005576">
    <property type="term" value="C:extracellular region"/>
    <property type="evidence" value="ECO:0007669"/>
    <property type="project" value="UniProtKB-SubCell"/>
</dbReference>
<dbReference type="GO" id="GO:0090729">
    <property type="term" value="F:toxin activity"/>
    <property type="evidence" value="ECO:0007669"/>
    <property type="project" value="UniProtKB-KW"/>
</dbReference>
<dbReference type="FunFam" id="3.10.100.10:FF:000087">
    <property type="entry name" value="Snaclec rhodocetin subunit delta"/>
    <property type="match status" value="1"/>
</dbReference>
<dbReference type="Gene3D" id="3.10.100.10">
    <property type="entry name" value="Mannose-Binding Protein A, subunit A"/>
    <property type="match status" value="1"/>
</dbReference>
<dbReference type="InterPro" id="IPR001304">
    <property type="entry name" value="C-type_lectin-like"/>
</dbReference>
<dbReference type="InterPro" id="IPR016186">
    <property type="entry name" value="C-type_lectin-like/link_sf"/>
</dbReference>
<dbReference type="InterPro" id="IPR050111">
    <property type="entry name" value="C-type_lectin/snaclec_domain"/>
</dbReference>
<dbReference type="InterPro" id="IPR018378">
    <property type="entry name" value="C-type_lectin_CS"/>
</dbReference>
<dbReference type="InterPro" id="IPR016187">
    <property type="entry name" value="CTDL_fold"/>
</dbReference>
<dbReference type="PANTHER" id="PTHR22803">
    <property type="entry name" value="MANNOSE, PHOSPHOLIPASE, LECTIN RECEPTOR RELATED"/>
    <property type="match status" value="1"/>
</dbReference>
<dbReference type="Pfam" id="PF00059">
    <property type="entry name" value="Lectin_C"/>
    <property type="match status" value="1"/>
</dbReference>
<dbReference type="SMART" id="SM00034">
    <property type="entry name" value="CLECT"/>
    <property type="match status" value="1"/>
</dbReference>
<dbReference type="SUPFAM" id="SSF56436">
    <property type="entry name" value="C-type lectin-like"/>
    <property type="match status" value="1"/>
</dbReference>
<dbReference type="PROSITE" id="PS00615">
    <property type="entry name" value="C_TYPE_LECTIN_1"/>
    <property type="match status" value="1"/>
</dbReference>
<dbReference type="PROSITE" id="PS50041">
    <property type="entry name" value="C_TYPE_LECTIN_2"/>
    <property type="match status" value="1"/>
</dbReference>